<proteinExistence type="inferred from homology"/>
<keyword id="KW-0408">Iron</keyword>
<keyword id="KW-0479">Metal-binding</keyword>
<keyword id="KW-0560">Oxidoreductase</keyword>
<keyword id="KW-1185">Reference proteome</keyword>
<keyword id="KW-0964">Secreted</keyword>
<dbReference type="EC" id="1.15.1.1"/>
<dbReference type="EMBL" id="AE000516">
    <property type="protein sequence ID" value="AAK48327.1"/>
    <property type="molecule type" value="Genomic_DNA"/>
</dbReference>
<dbReference type="PIR" id="S15205">
    <property type="entry name" value="S15205"/>
</dbReference>
<dbReference type="RefSeq" id="WP_003399735.1">
    <property type="nucleotide sequence ID" value="NZ_KK341227.1"/>
</dbReference>
<dbReference type="SMR" id="P9WGE6"/>
<dbReference type="KEGG" id="mtc:MT3960"/>
<dbReference type="PATRIC" id="fig|83331.31.peg.4258"/>
<dbReference type="HOGENOM" id="CLU_031625_2_2_11"/>
<dbReference type="Proteomes" id="UP000001020">
    <property type="component" value="Chromosome"/>
</dbReference>
<dbReference type="GO" id="GO:0005576">
    <property type="term" value="C:extracellular region"/>
    <property type="evidence" value="ECO:0007669"/>
    <property type="project" value="UniProtKB-SubCell"/>
</dbReference>
<dbReference type="GO" id="GO:0046872">
    <property type="term" value="F:metal ion binding"/>
    <property type="evidence" value="ECO:0007669"/>
    <property type="project" value="UniProtKB-KW"/>
</dbReference>
<dbReference type="GO" id="GO:0004784">
    <property type="term" value="F:superoxide dismutase activity"/>
    <property type="evidence" value="ECO:0007669"/>
    <property type="project" value="UniProtKB-EC"/>
</dbReference>
<dbReference type="FunFam" id="1.10.287.990:FF:000001">
    <property type="entry name" value="Superoxide dismutase"/>
    <property type="match status" value="1"/>
</dbReference>
<dbReference type="FunFam" id="3.55.40.20:FF:000004">
    <property type="entry name" value="Superoxide dismutase [Fe]"/>
    <property type="match status" value="1"/>
</dbReference>
<dbReference type="Gene3D" id="1.10.287.990">
    <property type="entry name" value="Fe,Mn superoxide dismutase (SOD) domain"/>
    <property type="match status" value="1"/>
</dbReference>
<dbReference type="Gene3D" id="3.55.40.20">
    <property type="entry name" value="Iron/manganese superoxide dismutase, C-terminal domain"/>
    <property type="match status" value="1"/>
</dbReference>
<dbReference type="InterPro" id="IPR050265">
    <property type="entry name" value="Fe/Mn_Superoxide_Dismutase"/>
</dbReference>
<dbReference type="InterPro" id="IPR001189">
    <property type="entry name" value="Mn/Fe_SOD"/>
</dbReference>
<dbReference type="InterPro" id="IPR019833">
    <property type="entry name" value="Mn/Fe_SOD_BS"/>
</dbReference>
<dbReference type="InterPro" id="IPR019832">
    <property type="entry name" value="Mn/Fe_SOD_C"/>
</dbReference>
<dbReference type="InterPro" id="IPR019831">
    <property type="entry name" value="Mn/Fe_SOD_N"/>
</dbReference>
<dbReference type="InterPro" id="IPR036324">
    <property type="entry name" value="Mn/Fe_SOD_N_sf"/>
</dbReference>
<dbReference type="InterPro" id="IPR036314">
    <property type="entry name" value="SOD_C_sf"/>
</dbReference>
<dbReference type="PANTHER" id="PTHR11404">
    <property type="entry name" value="SUPEROXIDE DISMUTASE 2"/>
    <property type="match status" value="1"/>
</dbReference>
<dbReference type="PANTHER" id="PTHR11404:SF6">
    <property type="entry name" value="SUPEROXIDE DISMUTASE [MN], MITOCHONDRIAL"/>
    <property type="match status" value="1"/>
</dbReference>
<dbReference type="Pfam" id="PF02777">
    <property type="entry name" value="Sod_Fe_C"/>
    <property type="match status" value="1"/>
</dbReference>
<dbReference type="Pfam" id="PF00081">
    <property type="entry name" value="Sod_Fe_N"/>
    <property type="match status" value="1"/>
</dbReference>
<dbReference type="PIRSF" id="PIRSF000349">
    <property type="entry name" value="SODismutase"/>
    <property type="match status" value="1"/>
</dbReference>
<dbReference type="PRINTS" id="PR01703">
    <property type="entry name" value="MNSODISMTASE"/>
</dbReference>
<dbReference type="SUPFAM" id="SSF54719">
    <property type="entry name" value="Fe,Mn superoxide dismutase (SOD), C-terminal domain"/>
    <property type="match status" value="1"/>
</dbReference>
<dbReference type="SUPFAM" id="SSF46609">
    <property type="entry name" value="Fe,Mn superoxide dismutase (SOD), N-terminal domain"/>
    <property type="match status" value="1"/>
</dbReference>
<dbReference type="PROSITE" id="PS00088">
    <property type="entry name" value="SOD_MN"/>
    <property type="match status" value="1"/>
</dbReference>
<reference key="1">
    <citation type="journal article" date="2002" name="J. Bacteriol.">
        <title>Whole-genome comparison of Mycobacterium tuberculosis clinical and laboratory strains.</title>
        <authorList>
            <person name="Fleischmann R.D."/>
            <person name="Alland D."/>
            <person name="Eisen J.A."/>
            <person name="Carpenter L."/>
            <person name="White O."/>
            <person name="Peterson J.D."/>
            <person name="DeBoy R.T."/>
            <person name="Dodson R.J."/>
            <person name="Gwinn M.L."/>
            <person name="Haft D.H."/>
            <person name="Hickey E.K."/>
            <person name="Kolonay J.F."/>
            <person name="Nelson W.C."/>
            <person name="Umayam L.A."/>
            <person name="Ermolaeva M.D."/>
            <person name="Salzberg S.L."/>
            <person name="Delcher A."/>
            <person name="Utterback T.R."/>
            <person name="Weidman J.F."/>
            <person name="Khouri H.M."/>
            <person name="Gill J."/>
            <person name="Mikula A."/>
            <person name="Bishai W."/>
            <person name="Jacobs W.R. Jr."/>
            <person name="Venter J.C."/>
            <person name="Fraser C.M."/>
        </authorList>
    </citation>
    <scope>NUCLEOTIDE SEQUENCE [LARGE SCALE GENOMIC DNA]</scope>
    <source>
        <strain>CDC 1551 / Oshkosh</strain>
    </source>
</reference>
<organism>
    <name type="scientific">Mycobacterium tuberculosis (strain CDC 1551 / Oshkosh)</name>
    <dbReference type="NCBI Taxonomy" id="83331"/>
    <lineage>
        <taxon>Bacteria</taxon>
        <taxon>Bacillati</taxon>
        <taxon>Actinomycetota</taxon>
        <taxon>Actinomycetes</taxon>
        <taxon>Mycobacteriales</taxon>
        <taxon>Mycobacteriaceae</taxon>
        <taxon>Mycobacterium</taxon>
        <taxon>Mycobacterium tuberculosis complex</taxon>
    </lineage>
</organism>
<comment type="function">
    <text evidence="1">Destroys superoxide anion radicals which are normally produced within the cells and which are toxic to biological systems.</text>
</comment>
<comment type="catalytic activity">
    <reaction>
        <text>2 superoxide + 2 H(+) = H2O2 + O2</text>
        <dbReference type="Rhea" id="RHEA:20696"/>
        <dbReference type="ChEBI" id="CHEBI:15378"/>
        <dbReference type="ChEBI" id="CHEBI:15379"/>
        <dbReference type="ChEBI" id="CHEBI:16240"/>
        <dbReference type="ChEBI" id="CHEBI:18421"/>
        <dbReference type="EC" id="1.15.1.1"/>
    </reaction>
</comment>
<comment type="cofactor">
    <cofactor evidence="1">
        <name>Fe cation</name>
        <dbReference type="ChEBI" id="CHEBI:24875"/>
    </cofactor>
    <text evidence="1">Binds 1 Fe cation per subunit.</text>
</comment>
<comment type="subunit">
    <text evidence="1">Homotetramer.</text>
</comment>
<comment type="subcellular location">
    <subcellularLocation>
        <location evidence="1">Secreted</location>
    </subcellularLocation>
</comment>
<comment type="similarity">
    <text evidence="2">Belongs to the iron/manganese superoxide dismutase family.</text>
</comment>
<comment type="caution">
    <text evidence="2">Although found extracellularly, no signal sequence is present. An alternative secretory pathway may be used.</text>
</comment>
<feature type="chain" id="PRO_0000428375" description="Superoxide dismutase [Fe]">
    <location>
        <begin position="1"/>
        <end position="207"/>
    </location>
</feature>
<feature type="binding site" evidence="1">
    <location>
        <position position="28"/>
    </location>
    <ligand>
        <name>Fe cation</name>
        <dbReference type="ChEBI" id="CHEBI:24875"/>
    </ligand>
</feature>
<feature type="binding site" evidence="1">
    <location>
        <position position="76"/>
    </location>
    <ligand>
        <name>Fe cation</name>
        <dbReference type="ChEBI" id="CHEBI:24875"/>
    </ligand>
</feature>
<feature type="binding site" evidence="1">
    <location>
        <position position="160"/>
    </location>
    <ligand>
        <name>Fe cation</name>
        <dbReference type="ChEBI" id="CHEBI:24875"/>
    </ligand>
</feature>
<feature type="binding site" evidence="1">
    <location>
        <position position="164"/>
    </location>
    <ligand>
        <name>Fe cation</name>
        <dbReference type="ChEBI" id="CHEBI:24875"/>
    </ligand>
</feature>
<sequence>MAEYTLPDLDWDYGALEPHISGQINELHHSKHHATYVKGANDAVAKLEEARAKEDHSAILLNEKNLAFNLAGHVNHTIWWKNLSPNGGDKPTGELAAAIADAFGSFDKFRAQFHAAATTVQGSGWAALGWDTLGNKLLIFQVYDHQTNFPLGIVPLLLLDMWEHAFYLQYKNVKVDFAKAFWNVVNWADVQSRYAAATSQTKGLIFG</sequence>
<protein>
    <recommendedName>
        <fullName>Superoxide dismutase [Fe]</fullName>
        <ecNumber>1.15.1.1</ecNumber>
    </recommendedName>
</protein>
<name>SODF_MYCTO</name>
<evidence type="ECO:0000250" key="1"/>
<evidence type="ECO:0000305" key="2"/>
<accession>P9WGE6</accession>
<accession>L0TGX2</accession>
<accession>P17670</accession>
<accession>P96231</accession>
<gene>
    <name type="primary">sodB</name>
    <name type="synonym">sod</name>
    <name type="synonym">sodA</name>
    <name type="ordered locus">MT3960</name>
</gene>